<name>ATPA_EMIHU</name>
<proteinExistence type="inferred from homology"/>
<keyword id="KW-0066">ATP synthesis</keyword>
<keyword id="KW-0067">ATP-binding</keyword>
<keyword id="KW-0139">CF(1)</keyword>
<keyword id="KW-0150">Chloroplast</keyword>
<keyword id="KW-0375">Hydrogen ion transport</keyword>
<keyword id="KW-0406">Ion transport</keyword>
<keyword id="KW-0472">Membrane</keyword>
<keyword id="KW-0547">Nucleotide-binding</keyword>
<keyword id="KW-0934">Plastid</keyword>
<keyword id="KW-0793">Thylakoid</keyword>
<keyword id="KW-1278">Translocase</keyword>
<keyword id="KW-0813">Transport</keyword>
<evidence type="ECO:0000255" key="1">
    <source>
        <dbReference type="HAMAP-Rule" id="MF_01346"/>
    </source>
</evidence>
<sequence length="499" mass="53427">MINIRPDEISNIIRQQIESYDQEVQIDNVGTVLQIGDGIARVYGLEQVMAGELLEFDDSTVGIALNLENDNVGAVLMGPGLGILEGSAVRSTGKIAQVPVGDAFLGRVVNSLAKPIDGKGDIPASETRLVESMAPGIITRKSVCEPVQTGITAIDSMIPIGRGQRELIIGDRQTGKTSVAIDTIINQKTEDVICVYVAIGQKASSVAGVVSTLEDKGALGYTIIVAANADEPATLQYIAPYTGAALAEYFMYKGKATVIVYDDLTKQASAYRQMSLLLRRPPGREAYPGDVFYLHSRLLERAAKLSDALGGGSMTALPIIETQAGDVSAYIPTNVISITDGQIFLSGDLFNSGIRPAINVGISVSRVGSAAQTKAMKQVAGKLKLELAQFAELEAFSQFASDLDAATQAELARGVRLREMLKQKQNSPISVEEQVAIIYAGINGYLDTIPVSEVKGFVEKLRSYLRNSAPQFISSIQSEKKLSPENEELLKKILTDLKG</sequence>
<feature type="chain" id="PRO_0000238420" description="ATP synthase subunit alpha, chloroplastic">
    <location>
        <begin position="1"/>
        <end position="499"/>
    </location>
</feature>
<feature type="binding site" evidence="1">
    <location>
        <begin position="170"/>
        <end position="177"/>
    </location>
    <ligand>
        <name>ATP</name>
        <dbReference type="ChEBI" id="CHEBI:30616"/>
    </ligand>
</feature>
<feature type="site" description="Required for activity" evidence="1">
    <location>
        <position position="363"/>
    </location>
</feature>
<protein>
    <recommendedName>
        <fullName evidence="1">ATP synthase subunit alpha, chloroplastic</fullName>
        <ecNumber evidence="1">7.1.2.2</ecNumber>
    </recommendedName>
    <alternativeName>
        <fullName evidence="1">ATP synthase F1 sector subunit alpha</fullName>
    </alternativeName>
    <alternativeName>
        <fullName evidence="1">F-ATPase subunit alpha</fullName>
    </alternativeName>
</protein>
<organism>
    <name type="scientific">Emiliania huxleyi</name>
    <name type="common">Coccolithophore</name>
    <name type="synonym">Pontosphaera huxleyi</name>
    <dbReference type="NCBI Taxonomy" id="2903"/>
    <lineage>
        <taxon>Eukaryota</taxon>
        <taxon>Haptista</taxon>
        <taxon>Haptophyta</taxon>
        <taxon>Prymnesiophyceae</taxon>
        <taxon>Isochrysidales</taxon>
        <taxon>Noelaerhabdaceae</taxon>
        <taxon>Emiliania</taxon>
    </lineage>
</organism>
<geneLocation type="chloroplast"/>
<comment type="function">
    <text evidence="1">Produces ATP from ADP in the presence of a proton gradient across the membrane. The alpha chain is a regulatory subunit.</text>
</comment>
<comment type="catalytic activity">
    <reaction evidence="1">
        <text>ATP + H2O + 4 H(+)(in) = ADP + phosphate + 5 H(+)(out)</text>
        <dbReference type="Rhea" id="RHEA:57720"/>
        <dbReference type="ChEBI" id="CHEBI:15377"/>
        <dbReference type="ChEBI" id="CHEBI:15378"/>
        <dbReference type="ChEBI" id="CHEBI:30616"/>
        <dbReference type="ChEBI" id="CHEBI:43474"/>
        <dbReference type="ChEBI" id="CHEBI:456216"/>
        <dbReference type="EC" id="7.1.2.2"/>
    </reaction>
</comment>
<comment type="subunit">
    <text evidence="1">F-type ATPases have 2 components, CF(1) - the catalytic core - and CF(0) - the membrane proton channel. CF(1) has five subunits: alpha(3), beta(3), gamma(1), delta(1), epsilon(1). CF(0) has four main subunits: a, b, b' and c.</text>
</comment>
<comment type="subcellular location">
    <subcellularLocation>
        <location evidence="1">Plastid</location>
        <location evidence="1">Chloroplast thylakoid membrane</location>
        <topology evidence="1">Peripheral membrane protein</topology>
    </subcellularLocation>
</comment>
<comment type="similarity">
    <text evidence="1">Belongs to the ATPase alpha/beta chains family.</text>
</comment>
<gene>
    <name evidence="1" type="primary">atpA</name>
</gene>
<reference key="1">
    <citation type="journal article" date="2006" name="J. Mol. Evol.">
        <title>Rate variation as a function of gene origin in plastid-derived genes of peridinin-containing dinoflagellates.</title>
        <authorList>
            <person name="Bachvaroff T.R."/>
            <person name="Sanchez-Puerta M.V."/>
            <person name="Delwiche C.F."/>
        </authorList>
    </citation>
    <scope>NUCLEOTIDE SEQUENCE [GENOMIC DNA]</scope>
    <source>
        <strain>CCMP373 / CSIRO-CS-57 / BT6</strain>
    </source>
</reference>
<reference key="2">
    <citation type="journal article" date="2005" name="DNA Res.">
        <title>The complete plastid genome sequence of the haptophyte Emiliania huxleyi: a comparison to other plastid genomes.</title>
        <authorList>
            <person name="Sanchez-Puerta M.V."/>
            <person name="Bachvaroff T.R."/>
            <person name="Delwiche C.F."/>
        </authorList>
    </citation>
    <scope>NUCLEOTIDE SEQUENCE [LARGE SCALE GENOMIC DNA]</scope>
    <source>
        <strain>CCMP373 / CSIRO-CS-57 / BT6</strain>
    </source>
</reference>
<dbReference type="EC" id="7.1.2.2" evidence="1"/>
<dbReference type="EMBL" id="AY675516">
    <property type="protein sequence ID" value="AAU81898.1"/>
    <property type="molecule type" value="Genomic_DNA"/>
</dbReference>
<dbReference type="EMBL" id="AY741371">
    <property type="protein sequence ID" value="AAX13869.1"/>
    <property type="molecule type" value="Genomic_DNA"/>
</dbReference>
<dbReference type="RefSeq" id="YP_277370.1">
    <property type="nucleotide sequence ID" value="NC_007288.1"/>
</dbReference>
<dbReference type="SMR" id="Q4G397"/>
<dbReference type="STRING" id="2903.Q4G397"/>
<dbReference type="GeneID" id="3562446"/>
<dbReference type="GO" id="GO:0009535">
    <property type="term" value="C:chloroplast thylakoid membrane"/>
    <property type="evidence" value="ECO:0007669"/>
    <property type="project" value="UniProtKB-SubCell"/>
</dbReference>
<dbReference type="GO" id="GO:0045259">
    <property type="term" value="C:proton-transporting ATP synthase complex"/>
    <property type="evidence" value="ECO:0007669"/>
    <property type="project" value="UniProtKB-KW"/>
</dbReference>
<dbReference type="GO" id="GO:0043531">
    <property type="term" value="F:ADP binding"/>
    <property type="evidence" value="ECO:0007669"/>
    <property type="project" value="TreeGrafter"/>
</dbReference>
<dbReference type="GO" id="GO:0005524">
    <property type="term" value="F:ATP binding"/>
    <property type="evidence" value="ECO:0007669"/>
    <property type="project" value="UniProtKB-UniRule"/>
</dbReference>
<dbReference type="GO" id="GO:0046933">
    <property type="term" value="F:proton-transporting ATP synthase activity, rotational mechanism"/>
    <property type="evidence" value="ECO:0007669"/>
    <property type="project" value="UniProtKB-UniRule"/>
</dbReference>
<dbReference type="CDD" id="cd18113">
    <property type="entry name" value="ATP-synt_F1_alpha_C"/>
    <property type="match status" value="1"/>
</dbReference>
<dbReference type="CDD" id="cd18116">
    <property type="entry name" value="ATP-synt_F1_alpha_N"/>
    <property type="match status" value="1"/>
</dbReference>
<dbReference type="CDD" id="cd01132">
    <property type="entry name" value="F1-ATPase_alpha_CD"/>
    <property type="match status" value="1"/>
</dbReference>
<dbReference type="FunFam" id="1.20.150.20:FF:000001">
    <property type="entry name" value="ATP synthase subunit alpha"/>
    <property type="match status" value="1"/>
</dbReference>
<dbReference type="FunFam" id="2.40.30.20:FF:000001">
    <property type="entry name" value="ATP synthase subunit alpha"/>
    <property type="match status" value="1"/>
</dbReference>
<dbReference type="FunFam" id="3.40.50.300:FF:000002">
    <property type="entry name" value="ATP synthase subunit alpha"/>
    <property type="match status" value="1"/>
</dbReference>
<dbReference type="Gene3D" id="2.40.30.20">
    <property type="match status" value="1"/>
</dbReference>
<dbReference type="Gene3D" id="1.20.150.20">
    <property type="entry name" value="ATP synthase alpha/beta chain, C-terminal domain"/>
    <property type="match status" value="1"/>
</dbReference>
<dbReference type="Gene3D" id="3.40.50.300">
    <property type="entry name" value="P-loop containing nucleotide triphosphate hydrolases"/>
    <property type="match status" value="1"/>
</dbReference>
<dbReference type="HAMAP" id="MF_01346">
    <property type="entry name" value="ATP_synth_alpha_bact"/>
    <property type="match status" value="1"/>
</dbReference>
<dbReference type="InterPro" id="IPR023366">
    <property type="entry name" value="ATP_synth_asu-like_sf"/>
</dbReference>
<dbReference type="InterPro" id="IPR000793">
    <property type="entry name" value="ATP_synth_asu_C"/>
</dbReference>
<dbReference type="InterPro" id="IPR038376">
    <property type="entry name" value="ATP_synth_asu_C_sf"/>
</dbReference>
<dbReference type="InterPro" id="IPR033732">
    <property type="entry name" value="ATP_synth_F1_a_nt-bd_dom"/>
</dbReference>
<dbReference type="InterPro" id="IPR005294">
    <property type="entry name" value="ATP_synth_F1_asu"/>
</dbReference>
<dbReference type="InterPro" id="IPR020003">
    <property type="entry name" value="ATPase_a/bsu_AS"/>
</dbReference>
<dbReference type="InterPro" id="IPR004100">
    <property type="entry name" value="ATPase_F1/V1/A1_a/bsu_N"/>
</dbReference>
<dbReference type="InterPro" id="IPR036121">
    <property type="entry name" value="ATPase_F1/V1/A1_a/bsu_N_sf"/>
</dbReference>
<dbReference type="InterPro" id="IPR000194">
    <property type="entry name" value="ATPase_F1/V1/A1_a/bsu_nucl-bd"/>
</dbReference>
<dbReference type="InterPro" id="IPR027417">
    <property type="entry name" value="P-loop_NTPase"/>
</dbReference>
<dbReference type="NCBIfam" id="TIGR00962">
    <property type="entry name" value="atpA"/>
    <property type="match status" value="1"/>
</dbReference>
<dbReference type="NCBIfam" id="NF009884">
    <property type="entry name" value="PRK13343.1"/>
    <property type="match status" value="1"/>
</dbReference>
<dbReference type="PANTHER" id="PTHR48082">
    <property type="entry name" value="ATP SYNTHASE SUBUNIT ALPHA, MITOCHONDRIAL"/>
    <property type="match status" value="1"/>
</dbReference>
<dbReference type="PANTHER" id="PTHR48082:SF2">
    <property type="entry name" value="ATP SYNTHASE SUBUNIT ALPHA, MITOCHONDRIAL"/>
    <property type="match status" value="1"/>
</dbReference>
<dbReference type="Pfam" id="PF00006">
    <property type="entry name" value="ATP-synt_ab"/>
    <property type="match status" value="1"/>
</dbReference>
<dbReference type="Pfam" id="PF00306">
    <property type="entry name" value="ATP-synt_ab_C"/>
    <property type="match status" value="1"/>
</dbReference>
<dbReference type="Pfam" id="PF02874">
    <property type="entry name" value="ATP-synt_ab_N"/>
    <property type="match status" value="1"/>
</dbReference>
<dbReference type="PIRSF" id="PIRSF039088">
    <property type="entry name" value="F_ATPase_subunit_alpha"/>
    <property type="match status" value="1"/>
</dbReference>
<dbReference type="SUPFAM" id="SSF47917">
    <property type="entry name" value="C-terminal domain of alpha and beta subunits of F1 ATP synthase"/>
    <property type="match status" value="1"/>
</dbReference>
<dbReference type="SUPFAM" id="SSF50615">
    <property type="entry name" value="N-terminal domain of alpha and beta subunits of F1 ATP synthase"/>
    <property type="match status" value="1"/>
</dbReference>
<dbReference type="SUPFAM" id="SSF52540">
    <property type="entry name" value="P-loop containing nucleoside triphosphate hydrolases"/>
    <property type="match status" value="1"/>
</dbReference>
<dbReference type="PROSITE" id="PS00152">
    <property type="entry name" value="ATPASE_ALPHA_BETA"/>
    <property type="match status" value="1"/>
</dbReference>
<accession>Q4G397</accession>